<organism>
    <name type="scientific">Macaca mulatta</name>
    <name type="common">Rhesus macaque</name>
    <dbReference type="NCBI Taxonomy" id="9544"/>
    <lineage>
        <taxon>Eukaryota</taxon>
        <taxon>Metazoa</taxon>
        <taxon>Chordata</taxon>
        <taxon>Craniata</taxon>
        <taxon>Vertebrata</taxon>
        <taxon>Euteleostomi</taxon>
        <taxon>Mammalia</taxon>
        <taxon>Eutheria</taxon>
        <taxon>Euarchontoglires</taxon>
        <taxon>Primates</taxon>
        <taxon>Haplorrhini</taxon>
        <taxon>Catarrhini</taxon>
        <taxon>Cercopithecidae</taxon>
        <taxon>Cercopithecinae</taxon>
        <taxon>Macaca</taxon>
    </lineage>
</organism>
<keyword id="KW-0165">Cleavage on pair of basic residues</keyword>
<keyword id="KW-0372">Hormone</keyword>
<keyword id="KW-1185">Reference proteome</keyword>
<keyword id="KW-0964">Secreted</keyword>
<keyword id="KW-0732">Signal</keyword>
<protein>
    <recommendedName>
        <fullName>Promotilin</fullName>
    </recommendedName>
    <component>
        <recommendedName>
            <fullName>Motilin</fullName>
        </recommendedName>
    </component>
    <component>
        <recommendedName>
            <fullName>Motilin-associated peptide</fullName>
            <shortName>MAP</shortName>
        </recommendedName>
    </component>
</protein>
<proteinExistence type="inferred from homology"/>
<gene>
    <name type="primary">MLN</name>
</gene>
<dbReference type="EMBL" id="AF016372">
    <property type="protein sequence ID" value="AAC82510.1"/>
    <property type="molecule type" value="mRNA"/>
</dbReference>
<dbReference type="RefSeq" id="NP_001027979.1">
    <property type="nucleotide sequence ID" value="NM_001032807.2"/>
</dbReference>
<dbReference type="FunCoup" id="O18811">
    <property type="interactions" value="432"/>
</dbReference>
<dbReference type="STRING" id="9544.ENSMMUP00000062999"/>
<dbReference type="PaxDb" id="9544-ENSMMUP00000028628"/>
<dbReference type="GeneID" id="574099"/>
<dbReference type="KEGG" id="mcc:574099"/>
<dbReference type="CTD" id="4295"/>
<dbReference type="eggNOG" id="ENOG502SS7F">
    <property type="taxonomic scope" value="Eukaryota"/>
</dbReference>
<dbReference type="InParanoid" id="O18811"/>
<dbReference type="OrthoDB" id="9937685at2759"/>
<dbReference type="Proteomes" id="UP000006718">
    <property type="component" value="Unassembled WGS sequence"/>
</dbReference>
<dbReference type="GO" id="GO:0005576">
    <property type="term" value="C:extracellular region"/>
    <property type="evidence" value="ECO:0007669"/>
    <property type="project" value="UniProtKB-SubCell"/>
</dbReference>
<dbReference type="GO" id="GO:0005179">
    <property type="term" value="F:hormone activity"/>
    <property type="evidence" value="ECO:0007669"/>
    <property type="project" value="UniProtKB-KW"/>
</dbReference>
<dbReference type="GO" id="GO:0031788">
    <property type="term" value="F:motilin receptor binding"/>
    <property type="evidence" value="ECO:0000318"/>
    <property type="project" value="GO_Central"/>
</dbReference>
<dbReference type="InterPro" id="IPR006737">
    <property type="entry name" value="Motilin_assoc"/>
</dbReference>
<dbReference type="InterPro" id="IPR006738">
    <property type="entry name" value="Motilin_ghrelin"/>
</dbReference>
<dbReference type="InterPro" id="IPR015662">
    <property type="entry name" value="Promotilin"/>
</dbReference>
<dbReference type="PANTHER" id="PTHR14156">
    <property type="entry name" value="MOTILIN"/>
    <property type="match status" value="1"/>
</dbReference>
<dbReference type="PANTHER" id="PTHR14156:SF0">
    <property type="entry name" value="PROMOTILIN"/>
    <property type="match status" value="1"/>
</dbReference>
<dbReference type="Pfam" id="PF04643">
    <property type="entry name" value="Motilin_assoc"/>
    <property type="match status" value="1"/>
</dbReference>
<dbReference type="Pfam" id="PF04644">
    <property type="entry name" value="Motilin_ghrelin"/>
    <property type="match status" value="1"/>
</dbReference>
<accession>O18811</accession>
<comment type="function">
    <text evidence="1">Plays an important role in the regulation of interdigestive gastrointestinal motility and indirectly causes rhythmic contraction of duodenal and colonic smooth muscle.</text>
</comment>
<comment type="subcellular location">
    <subcellularLocation>
        <location>Secreted</location>
    </subcellularLocation>
</comment>
<comment type="similarity">
    <text evidence="3">Belongs to the motilin family.</text>
</comment>
<reference key="1">
    <citation type="journal article" date="1998" name="FEBS Lett.">
        <title>Isolation and sequence of cDNA encoding the motilin precursor from monkey intestine. Demonstration of the motilin precursor in the monkey brain.</title>
        <authorList>
            <person name="Huang Z."/>
            <person name="De Clercq P."/>
            <person name="Depoortere I."/>
            <person name="Peeters T.L."/>
        </authorList>
    </citation>
    <scope>NUCLEOTIDE SEQUENCE [MRNA]</scope>
    <source>
        <tissue>Intestine</tissue>
    </source>
</reference>
<feature type="signal peptide" evidence="1">
    <location>
        <begin position="1"/>
        <end position="25"/>
    </location>
</feature>
<feature type="chain" id="PRO_0000342172" description="Promotilin">
    <location>
        <begin position="26"/>
        <end position="115"/>
    </location>
</feature>
<feature type="peptide" id="PRO_0000019186" description="Motilin">
    <location>
        <begin position="26"/>
        <end position="47"/>
    </location>
</feature>
<feature type="peptide" id="PRO_0000019187" description="Motilin-associated peptide">
    <location>
        <begin position="50"/>
        <end position="115"/>
    </location>
</feature>
<feature type="region of interest" description="Disordered" evidence="2">
    <location>
        <begin position="40"/>
        <end position="74"/>
    </location>
</feature>
<evidence type="ECO:0000250" key="1"/>
<evidence type="ECO:0000256" key="2">
    <source>
        <dbReference type="SAM" id="MobiDB-lite"/>
    </source>
</evidence>
<evidence type="ECO:0000305" key="3"/>
<name>MOTI_MACMU</name>
<sequence length="115" mass="12821">MVSRKAVAALLVVHAPAMLASQTEAFVPIFTYGELQRMQEKERSKGQKKSLSVWQRSGEEGPVDPAEPIEEEGNEMIKLTAPLEIGMRMNSRQLEKYRAALEGLLSEMLPQHAAK</sequence>